<feature type="signal peptide" evidence="2">
    <location>
        <begin position="1"/>
        <end position="20"/>
    </location>
</feature>
<feature type="propeptide" id="PRO_0000401787" evidence="1">
    <location>
        <begin position="21"/>
        <end position="26"/>
    </location>
</feature>
<feature type="chain" id="PRO_0000401788" description="U8-lycotoxin-Ls1d">
    <location>
        <begin position="27"/>
        <end position="77"/>
    </location>
</feature>
<accession>B6DCY4</accession>
<dbReference type="EMBL" id="EU926068">
    <property type="protein sequence ID" value="ACI41400.1"/>
    <property type="molecule type" value="mRNA"/>
</dbReference>
<dbReference type="EMBL" id="FM864072">
    <property type="protein sequence ID" value="CAS03669.1"/>
    <property type="molecule type" value="mRNA"/>
</dbReference>
<dbReference type="SMR" id="B6DCY4"/>
<dbReference type="ArachnoServer" id="AS001007">
    <property type="toxin name" value="U8-lycotoxin-Ls1d"/>
</dbReference>
<dbReference type="GO" id="GO:0005576">
    <property type="term" value="C:extracellular region"/>
    <property type="evidence" value="ECO:0007669"/>
    <property type="project" value="UniProtKB-SubCell"/>
</dbReference>
<dbReference type="GO" id="GO:0090729">
    <property type="term" value="F:toxin activity"/>
    <property type="evidence" value="ECO:0007669"/>
    <property type="project" value="UniProtKB-KW"/>
</dbReference>
<dbReference type="InterPro" id="IPR019553">
    <property type="entry name" value="Spider_toxin_CSTX_knottin"/>
</dbReference>
<dbReference type="Pfam" id="PF10530">
    <property type="entry name" value="Toxin_35"/>
    <property type="match status" value="1"/>
</dbReference>
<keyword id="KW-1015">Disulfide bond</keyword>
<keyword id="KW-0964">Secreted</keyword>
<keyword id="KW-0732">Signal</keyword>
<keyword id="KW-0800">Toxin</keyword>
<evidence type="ECO:0000250" key="1"/>
<evidence type="ECO:0000255" key="2"/>
<evidence type="ECO:0000305" key="3"/>
<protein>
    <recommendedName>
        <fullName>U8-lycotoxin-Ls1d</fullName>
    </recommendedName>
    <alternativeName>
        <fullName>Toxin-like structure LSTX-H13</fullName>
    </alternativeName>
</protein>
<name>TX813_LYCSI</name>
<sequence length="77" mass="8543">MKLIIFTGLVLFAIVSLIEAQAENEKACLPQYQVCTDAPGNCCSNVVCDCYGRYKSGARIGRNCFCLQKGVIYKREN</sequence>
<reference key="1">
    <citation type="journal article" date="2010" name="Zoology">
        <title>Transcriptome analysis of the venom glands of the Chinese wolf spider Lycosa singoriensis.</title>
        <authorList>
            <person name="Zhang Y."/>
            <person name="Chen J."/>
            <person name="Tang X."/>
            <person name="Wang F."/>
            <person name="Jiang L."/>
            <person name="Xiong X."/>
            <person name="Wang M."/>
            <person name="Rong M."/>
            <person name="Liu Z."/>
            <person name="Liang S."/>
        </authorList>
    </citation>
    <scope>NUCLEOTIDE SEQUENCE [LARGE SCALE MRNA]</scope>
    <source>
        <tissue>Venom gland</tissue>
    </source>
</reference>
<proteinExistence type="evidence at transcript level"/>
<organism>
    <name type="scientific">Lycosa singoriensis</name>
    <name type="common">Wolf spider</name>
    <name type="synonym">Aranea singoriensis</name>
    <dbReference type="NCBI Taxonomy" id="434756"/>
    <lineage>
        <taxon>Eukaryota</taxon>
        <taxon>Metazoa</taxon>
        <taxon>Ecdysozoa</taxon>
        <taxon>Arthropoda</taxon>
        <taxon>Chelicerata</taxon>
        <taxon>Arachnida</taxon>
        <taxon>Araneae</taxon>
        <taxon>Araneomorphae</taxon>
        <taxon>Entelegynae</taxon>
        <taxon>Lycosoidea</taxon>
        <taxon>Lycosidae</taxon>
        <taxon>Lycosa</taxon>
    </lineage>
</organism>
<comment type="subcellular location">
    <subcellularLocation>
        <location evidence="1">Secreted</location>
    </subcellularLocation>
</comment>
<comment type="tissue specificity">
    <text>Expressed by the venom gland.</text>
</comment>
<comment type="PTM">
    <text evidence="1">Contains 4 disulfide bonds.</text>
</comment>
<comment type="similarity">
    <text evidence="3">Belongs to the neurotoxin 19 (CSTX) family. 08 (U8-Lctx) subfamily.</text>
</comment>